<name>PSAE_MASLA</name>
<organism>
    <name type="scientific">Mastigocladus laminosus</name>
    <name type="common">Fischerella sp.</name>
    <dbReference type="NCBI Taxonomy" id="83541"/>
    <lineage>
        <taxon>Bacteria</taxon>
        <taxon>Bacillati</taxon>
        <taxon>Cyanobacteriota</taxon>
        <taxon>Cyanophyceae</taxon>
        <taxon>Nostocales</taxon>
        <taxon>Hapalosiphonaceae</taxon>
        <taxon>Mastigocladus</taxon>
    </lineage>
</organism>
<accession>Q9ZFU3</accession>
<protein>
    <recommendedName>
        <fullName>Photosystem I reaction center subunit IV</fullName>
    </recommendedName>
</protein>
<dbReference type="EMBL" id="AF093820">
    <property type="protein sequence ID" value="AAC83370.1"/>
    <property type="molecule type" value="Genomic_DNA"/>
</dbReference>
<dbReference type="SMR" id="Q9ZFU3"/>
<dbReference type="GO" id="GO:0009538">
    <property type="term" value="C:photosystem I reaction center"/>
    <property type="evidence" value="ECO:0007669"/>
    <property type="project" value="InterPro"/>
</dbReference>
<dbReference type="GO" id="GO:0031676">
    <property type="term" value="C:plasma membrane-derived thylakoid membrane"/>
    <property type="evidence" value="ECO:0007669"/>
    <property type="project" value="UniProtKB-SubCell"/>
</dbReference>
<dbReference type="GO" id="GO:0015979">
    <property type="term" value="P:photosynthesis"/>
    <property type="evidence" value="ECO:0007669"/>
    <property type="project" value="UniProtKB-UniRule"/>
</dbReference>
<dbReference type="Gene3D" id="2.30.30.50">
    <property type="match status" value="1"/>
</dbReference>
<dbReference type="HAMAP" id="MF_00613">
    <property type="entry name" value="PSI_PsaE"/>
    <property type="match status" value="1"/>
</dbReference>
<dbReference type="InterPro" id="IPR008990">
    <property type="entry name" value="Elect_transpt_acc-like_dom_sf"/>
</dbReference>
<dbReference type="InterPro" id="IPR003375">
    <property type="entry name" value="PSI_PsaE"/>
</dbReference>
<dbReference type="NCBIfam" id="NF002745">
    <property type="entry name" value="PRK02749.1"/>
    <property type="match status" value="1"/>
</dbReference>
<dbReference type="PANTHER" id="PTHR34549">
    <property type="entry name" value="PHOTOSYSTEM I REACTION CENTER SUBUNIT IV A, CHLOROPLASTIC-RELATED"/>
    <property type="match status" value="1"/>
</dbReference>
<dbReference type="PANTHER" id="PTHR34549:SF2">
    <property type="entry name" value="PHOTOSYSTEM I SUBUNIT IV"/>
    <property type="match status" value="1"/>
</dbReference>
<dbReference type="Pfam" id="PF02427">
    <property type="entry name" value="PSI_PsaE"/>
    <property type="match status" value="1"/>
</dbReference>
<dbReference type="SUPFAM" id="SSF50090">
    <property type="entry name" value="Electron transport accessory proteins"/>
    <property type="match status" value="1"/>
</dbReference>
<sequence>MVQRGSKVRILRPESYWFQDIGTVASIEQGGTIRYPVIVRFDKVNYAGVNTNNFAEYELVEVEAPKAKPKK</sequence>
<feature type="chain" id="PRO_0000204403" description="Photosystem I reaction center subunit IV">
    <location>
        <begin position="1"/>
        <end position="71"/>
    </location>
</feature>
<reference key="1">
    <citation type="online journal article" date="1999" name="Plant Gene Register">
        <title>Molecular cloning of the psaE gene for photosystem I subunit IV from the thermophilic cyanobacterium Mastigocladus laminosus.</title>
        <authorList>
            <person name="He Z.-Y."/>
            <person name="Chitnis P.R."/>
            <person name="Nechushtai R."/>
        </authorList>
        <locator>PGR99-165</locator>
    </citation>
    <scope>NUCLEOTIDE SEQUENCE [GENOMIC DNA]</scope>
</reference>
<keyword id="KW-0472">Membrane</keyword>
<keyword id="KW-0602">Photosynthesis</keyword>
<keyword id="KW-0603">Photosystem I</keyword>
<keyword id="KW-0793">Thylakoid</keyword>
<gene>
    <name type="primary">psaE</name>
</gene>
<evidence type="ECO:0000250" key="1"/>
<evidence type="ECO:0000305" key="2"/>
<proteinExistence type="inferred from homology"/>
<comment type="function">
    <text evidence="1">Stabilizes the interaction between PsaC and the PSI core, assists the docking of the ferredoxin to PSI and interacts with ferredoxin-NADP oxidoreductase.</text>
</comment>
<comment type="subcellular location">
    <subcellularLocation>
        <location evidence="1">Cellular thylakoid membrane</location>
        <topology evidence="1">Peripheral membrane protein</topology>
    </subcellularLocation>
</comment>
<comment type="similarity">
    <text evidence="2">Belongs to the PsaE family.</text>
</comment>